<keyword id="KW-0067">ATP-binding</keyword>
<keyword id="KW-0963">Cytoplasm</keyword>
<keyword id="KW-0418">Kinase</keyword>
<keyword id="KW-0460">Magnesium</keyword>
<keyword id="KW-0479">Metal-binding</keyword>
<keyword id="KW-0546">Nucleotide metabolism</keyword>
<keyword id="KW-0547">Nucleotide-binding</keyword>
<keyword id="KW-0597">Phosphoprotein</keyword>
<keyword id="KW-0808">Transferase</keyword>
<dbReference type="EC" id="2.7.4.6" evidence="1"/>
<dbReference type="EMBL" id="CP000825">
    <property type="protein sequence ID" value="ABV49675.1"/>
    <property type="molecule type" value="Genomic_DNA"/>
</dbReference>
<dbReference type="RefSeq" id="WP_012006860.1">
    <property type="nucleotide sequence ID" value="NC_009840.1"/>
</dbReference>
<dbReference type="SMR" id="A8G244"/>
<dbReference type="STRING" id="93060.P9215_00561"/>
<dbReference type="KEGG" id="pmh:P9215_00561"/>
<dbReference type="eggNOG" id="COG0105">
    <property type="taxonomic scope" value="Bacteria"/>
</dbReference>
<dbReference type="HOGENOM" id="CLU_060216_6_3_3"/>
<dbReference type="OrthoDB" id="9801161at2"/>
<dbReference type="Proteomes" id="UP000002014">
    <property type="component" value="Chromosome"/>
</dbReference>
<dbReference type="GO" id="GO:0005737">
    <property type="term" value="C:cytoplasm"/>
    <property type="evidence" value="ECO:0007669"/>
    <property type="project" value="UniProtKB-SubCell"/>
</dbReference>
<dbReference type="GO" id="GO:0005524">
    <property type="term" value="F:ATP binding"/>
    <property type="evidence" value="ECO:0007669"/>
    <property type="project" value="UniProtKB-UniRule"/>
</dbReference>
<dbReference type="GO" id="GO:0046872">
    <property type="term" value="F:metal ion binding"/>
    <property type="evidence" value="ECO:0007669"/>
    <property type="project" value="UniProtKB-KW"/>
</dbReference>
<dbReference type="GO" id="GO:0004550">
    <property type="term" value="F:nucleoside diphosphate kinase activity"/>
    <property type="evidence" value="ECO:0007669"/>
    <property type="project" value="UniProtKB-UniRule"/>
</dbReference>
<dbReference type="GO" id="GO:0006241">
    <property type="term" value="P:CTP biosynthetic process"/>
    <property type="evidence" value="ECO:0007669"/>
    <property type="project" value="UniProtKB-UniRule"/>
</dbReference>
<dbReference type="GO" id="GO:0006183">
    <property type="term" value="P:GTP biosynthetic process"/>
    <property type="evidence" value="ECO:0007669"/>
    <property type="project" value="UniProtKB-UniRule"/>
</dbReference>
<dbReference type="GO" id="GO:0006228">
    <property type="term" value="P:UTP biosynthetic process"/>
    <property type="evidence" value="ECO:0007669"/>
    <property type="project" value="UniProtKB-UniRule"/>
</dbReference>
<dbReference type="CDD" id="cd04413">
    <property type="entry name" value="NDPk_I"/>
    <property type="match status" value="1"/>
</dbReference>
<dbReference type="FunFam" id="3.30.70.141:FF:000002">
    <property type="entry name" value="Nucleoside diphosphate kinase"/>
    <property type="match status" value="1"/>
</dbReference>
<dbReference type="Gene3D" id="3.30.70.141">
    <property type="entry name" value="Nucleoside diphosphate kinase-like domain"/>
    <property type="match status" value="1"/>
</dbReference>
<dbReference type="HAMAP" id="MF_00451">
    <property type="entry name" value="NDP_kinase"/>
    <property type="match status" value="1"/>
</dbReference>
<dbReference type="InterPro" id="IPR034907">
    <property type="entry name" value="NDK-like_dom"/>
</dbReference>
<dbReference type="InterPro" id="IPR036850">
    <property type="entry name" value="NDK-like_dom_sf"/>
</dbReference>
<dbReference type="InterPro" id="IPR001564">
    <property type="entry name" value="Nucleoside_diP_kinase"/>
</dbReference>
<dbReference type="InterPro" id="IPR023005">
    <property type="entry name" value="Nucleoside_diP_kinase_AS"/>
</dbReference>
<dbReference type="NCBIfam" id="NF001908">
    <property type="entry name" value="PRK00668.1"/>
    <property type="match status" value="1"/>
</dbReference>
<dbReference type="PANTHER" id="PTHR11349">
    <property type="entry name" value="NUCLEOSIDE DIPHOSPHATE KINASE"/>
    <property type="match status" value="1"/>
</dbReference>
<dbReference type="Pfam" id="PF00334">
    <property type="entry name" value="NDK"/>
    <property type="match status" value="1"/>
</dbReference>
<dbReference type="PRINTS" id="PR01243">
    <property type="entry name" value="NUCDPKINASE"/>
</dbReference>
<dbReference type="SMART" id="SM00562">
    <property type="entry name" value="NDK"/>
    <property type="match status" value="1"/>
</dbReference>
<dbReference type="SUPFAM" id="SSF54919">
    <property type="entry name" value="Nucleoside diphosphate kinase, NDK"/>
    <property type="match status" value="1"/>
</dbReference>
<dbReference type="PROSITE" id="PS00469">
    <property type="entry name" value="NDPK"/>
    <property type="match status" value="1"/>
</dbReference>
<dbReference type="PROSITE" id="PS51374">
    <property type="entry name" value="NDPK_LIKE"/>
    <property type="match status" value="1"/>
</dbReference>
<accession>A8G244</accession>
<evidence type="ECO:0000255" key="1">
    <source>
        <dbReference type="HAMAP-Rule" id="MF_00451"/>
    </source>
</evidence>
<reference key="1">
    <citation type="journal article" date="2007" name="PLoS Genet.">
        <title>Patterns and implications of gene gain and loss in the evolution of Prochlorococcus.</title>
        <authorList>
            <person name="Kettler G.C."/>
            <person name="Martiny A.C."/>
            <person name="Huang K."/>
            <person name="Zucker J."/>
            <person name="Coleman M.L."/>
            <person name="Rodrigue S."/>
            <person name="Chen F."/>
            <person name="Lapidus A."/>
            <person name="Ferriera S."/>
            <person name="Johnson J."/>
            <person name="Steglich C."/>
            <person name="Church G.M."/>
            <person name="Richardson P."/>
            <person name="Chisholm S.W."/>
        </authorList>
    </citation>
    <scope>NUCLEOTIDE SEQUENCE [LARGE SCALE GENOMIC DNA]</scope>
    <source>
        <strain>MIT 9215</strain>
    </source>
</reference>
<protein>
    <recommendedName>
        <fullName evidence="1">Nucleoside diphosphate kinase</fullName>
        <shortName evidence="1">NDK</shortName>
        <shortName evidence="1">NDP kinase</shortName>
        <ecNumber evidence="1">2.7.4.6</ecNumber>
    </recommendedName>
    <alternativeName>
        <fullName evidence="1">Nucleoside-2-P kinase</fullName>
    </alternativeName>
</protein>
<feature type="chain" id="PRO_1000060283" description="Nucleoside diphosphate kinase">
    <location>
        <begin position="1"/>
        <end position="152"/>
    </location>
</feature>
<feature type="active site" description="Pros-phosphohistidine intermediate" evidence="1">
    <location>
        <position position="117"/>
    </location>
</feature>
<feature type="binding site" evidence="1">
    <location>
        <position position="11"/>
    </location>
    <ligand>
        <name>ATP</name>
        <dbReference type="ChEBI" id="CHEBI:30616"/>
    </ligand>
</feature>
<feature type="binding site" evidence="1">
    <location>
        <position position="59"/>
    </location>
    <ligand>
        <name>ATP</name>
        <dbReference type="ChEBI" id="CHEBI:30616"/>
    </ligand>
</feature>
<feature type="binding site" evidence="1">
    <location>
        <position position="87"/>
    </location>
    <ligand>
        <name>ATP</name>
        <dbReference type="ChEBI" id="CHEBI:30616"/>
    </ligand>
</feature>
<feature type="binding site" evidence="1">
    <location>
        <position position="93"/>
    </location>
    <ligand>
        <name>ATP</name>
        <dbReference type="ChEBI" id="CHEBI:30616"/>
    </ligand>
</feature>
<feature type="binding site" evidence="1">
    <location>
        <position position="104"/>
    </location>
    <ligand>
        <name>ATP</name>
        <dbReference type="ChEBI" id="CHEBI:30616"/>
    </ligand>
</feature>
<feature type="binding site" evidence="1">
    <location>
        <position position="114"/>
    </location>
    <ligand>
        <name>ATP</name>
        <dbReference type="ChEBI" id="CHEBI:30616"/>
    </ligand>
</feature>
<gene>
    <name evidence="1" type="primary">ndk</name>
    <name type="ordered locus">P9215_00561</name>
</gene>
<proteinExistence type="inferred from homology"/>
<sequence length="152" mass="17060">MTKERTFIAIKPDGVQRGYVAEIIGRFEKKGFKLVGLKQLIPSKDLAQNHYGVHRERPFFGDLVDFISSGPVVAMVWEGEGVILSARKLIGATKPLEAEPGTIRGDLAIDIGRNIIHGSDGEDTAKFEIDLWFNEEELCEWETSDAKWRSEN</sequence>
<comment type="function">
    <text evidence="1">Major role in the synthesis of nucleoside triphosphates other than ATP. The ATP gamma phosphate is transferred to the NDP beta phosphate via a ping-pong mechanism, using a phosphorylated active-site intermediate.</text>
</comment>
<comment type="catalytic activity">
    <reaction evidence="1">
        <text>a 2'-deoxyribonucleoside 5'-diphosphate + ATP = a 2'-deoxyribonucleoside 5'-triphosphate + ADP</text>
        <dbReference type="Rhea" id="RHEA:44640"/>
        <dbReference type="ChEBI" id="CHEBI:30616"/>
        <dbReference type="ChEBI" id="CHEBI:61560"/>
        <dbReference type="ChEBI" id="CHEBI:73316"/>
        <dbReference type="ChEBI" id="CHEBI:456216"/>
        <dbReference type="EC" id="2.7.4.6"/>
    </reaction>
</comment>
<comment type="catalytic activity">
    <reaction evidence="1">
        <text>a ribonucleoside 5'-diphosphate + ATP = a ribonucleoside 5'-triphosphate + ADP</text>
        <dbReference type="Rhea" id="RHEA:18113"/>
        <dbReference type="ChEBI" id="CHEBI:30616"/>
        <dbReference type="ChEBI" id="CHEBI:57930"/>
        <dbReference type="ChEBI" id="CHEBI:61557"/>
        <dbReference type="ChEBI" id="CHEBI:456216"/>
        <dbReference type="EC" id="2.7.4.6"/>
    </reaction>
</comment>
<comment type="cofactor">
    <cofactor evidence="1">
        <name>Mg(2+)</name>
        <dbReference type="ChEBI" id="CHEBI:18420"/>
    </cofactor>
</comment>
<comment type="subunit">
    <text evidence="1">Homotetramer.</text>
</comment>
<comment type="subcellular location">
    <subcellularLocation>
        <location evidence="1">Cytoplasm</location>
    </subcellularLocation>
</comment>
<comment type="similarity">
    <text evidence="1">Belongs to the NDK family.</text>
</comment>
<organism>
    <name type="scientific">Prochlorococcus marinus (strain MIT 9215)</name>
    <dbReference type="NCBI Taxonomy" id="93060"/>
    <lineage>
        <taxon>Bacteria</taxon>
        <taxon>Bacillati</taxon>
        <taxon>Cyanobacteriota</taxon>
        <taxon>Cyanophyceae</taxon>
        <taxon>Synechococcales</taxon>
        <taxon>Prochlorococcaceae</taxon>
        <taxon>Prochlorococcus</taxon>
    </lineage>
</organism>
<name>NDK_PROM2</name>